<dbReference type="EMBL" id="S49953">
    <property type="protein sequence ID" value="AAB24206.1"/>
    <property type="molecule type" value="mRNA"/>
</dbReference>
<dbReference type="EMBL" id="AC010145">
    <property type="protein sequence ID" value="AAY14951.1"/>
    <property type="molecule type" value="Genomic_DNA"/>
</dbReference>
<dbReference type="PIR" id="A49009">
    <property type="entry name" value="A49009"/>
</dbReference>
<dbReference type="RefSeq" id="NP_001316897.1">
    <property type="nucleotide sequence ID" value="NM_001329968.1"/>
</dbReference>
<dbReference type="RefSeq" id="NP_006307.1">
    <property type="nucleotide sequence ID" value="NM_006316.1"/>
</dbReference>
<dbReference type="FunCoup" id="P40205">
    <property type="interactions" value="19"/>
</dbReference>
<dbReference type="BioMuta" id="HGNC:16911"/>
<dbReference type="AGR" id="HGNC:16911"/>
<dbReference type="GeneCards" id="MYCNOS"/>
<dbReference type="HGNC" id="HGNC:16911">
    <property type="gene designation" value="MYCNOS"/>
</dbReference>
<dbReference type="MalaCards" id="MYCNOS"/>
<dbReference type="MIM" id="605374">
    <property type="type" value="gene"/>
</dbReference>
<dbReference type="neXtProt" id="NX_P40205"/>
<dbReference type="InParanoid" id="P40205"/>
<dbReference type="PAN-GO" id="P40205">
    <property type="GO annotations" value="0 GO annotations based on evolutionary models"/>
</dbReference>
<dbReference type="PathwayCommons" id="P40205"/>
<dbReference type="BioGRID-ORCS" id="10408">
    <property type="hits" value="0 hits in 1 CRISPR screen"/>
</dbReference>
<dbReference type="GenomeRNAi" id="10408"/>
<dbReference type="Pharos" id="P40205">
    <property type="development level" value="Tdark"/>
</dbReference>
<dbReference type="PRO" id="PR:P40205"/>
<dbReference type="Proteomes" id="UP000005640">
    <property type="component" value="Unplaced"/>
</dbReference>
<dbReference type="RNAct" id="P40205">
    <property type="molecule type" value="protein"/>
</dbReference>
<dbReference type="GO" id="GO:0005737">
    <property type="term" value="C:cytoplasm"/>
    <property type="evidence" value="ECO:0000314"/>
    <property type="project" value="UniProtKB"/>
</dbReference>
<dbReference type="GO" id="GO:0005634">
    <property type="term" value="C:nucleus"/>
    <property type="evidence" value="ECO:0000314"/>
    <property type="project" value="UniProtKB"/>
</dbReference>
<dbReference type="GO" id="GO:0043066">
    <property type="term" value="P:negative regulation of apoptotic process"/>
    <property type="evidence" value="ECO:0000315"/>
    <property type="project" value="DisProt"/>
</dbReference>
<dbReference type="GO" id="GO:0033673">
    <property type="term" value="P:negative regulation of kinase activity"/>
    <property type="evidence" value="ECO:0000314"/>
    <property type="project" value="UniProtKB"/>
</dbReference>
<dbReference type="GO" id="GO:0030335">
    <property type="term" value="P:positive regulation of cell migration"/>
    <property type="evidence" value="ECO:0000315"/>
    <property type="project" value="DisProt"/>
</dbReference>
<dbReference type="GO" id="GO:0050821">
    <property type="term" value="P:protein stabilization"/>
    <property type="evidence" value="ECO:0000315"/>
    <property type="project" value="DisProt"/>
</dbReference>
<dbReference type="GO" id="GO:0031647">
    <property type="term" value="P:regulation of protein stability"/>
    <property type="evidence" value="ECO:0000315"/>
    <property type="project" value="UniProtKB"/>
</dbReference>
<evidence type="ECO:0000269" key="1">
    <source>
    </source>
</evidence>
<evidence type="ECO:0000269" key="2">
    <source>
    </source>
</evidence>
<evidence type="ECO:0000305" key="3"/>
<protein>
    <recommendedName>
        <fullName>N-cym protein</fullName>
    </recommendedName>
    <alternativeName>
        <fullName>N-myc opposite strand</fullName>
    </alternativeName>
</protein>
<feature type="chain" id="PRO_0000096769" description="N-cym protein">
    <location>
        <begin position="1"/>
        <end position="109"/>
    </location>
</feature>
<feature type="sequence conflict" description="In Ref. 1; AAB24206." evidence="3" ref="1">
    <original>V</original>
    <variation>L</variation>
    <location>
        <position position="70"/>
    </location>
</feature>
<name>NCYM_HUMAN</name>
<gene>
    <name type="primary">MYCNOS</name>
    <name type="synonym">CYMN</name>
    <name type="synonym">NCYM</name>
</gene>
<proteinExistence type="evidence at protein level"/>
<sequence>MQHPPCEPGNCLSLKEKKITEGSGGVCWGGETDASNPAPALTACCAAEREANVEQGLAGRLLLCNYERRVVRRCKIAGRGRAPLGTRPLDVSSFKLKEEGRPPCLKINK</sequence>
<reference key="1">
    <citation type="journal article" date="1992" name="Cell Growth Differ.">
        <title>Isolation and characterization of complementary DNA for N-cym, a gene encoded by the DNA strand opposite to N-myc.</title>
        <authorList>
            <person name="Armstrong B.C."/>
            <person name="Krystal G.W."/>
        </authorList>
    </citation>
    <scope>NUCLEOTIDE SEQUENCE [MRNA]</scope>
    <scope>TISSUE SPECIFICITY</scope>
</reference>
<reference key="2">
    <citation type="journal article" date="2005" name="Nature">
        <title>Generation and annotation of the DNA sequences of human chromosomes 2 and 4.</title>
        <authorList>
            <person name="Hillier L.W."/>
            <person name="Graves T.A."/>
            <person name="Fulton R.S."/>
            <person name="Fulton L.A."/>
            <person name="Pepin K.H."/>
            <person name="Minx P."/>
            <person name="Wagner-McPherson C."/>
            <person name="Layman D."/>
            <person name="Wylie K."/>
            <person name="Sekhon M."/>
            <person name="Becker M.C."/>
            <person name="Fewell G.A."/>
            <person name="Delehaunty K.D."/>
            <person name="Miner T.L."/>
            <person name="Nash W.E."/>
            <person name="Kremitzki C."/>
            <person name="Oddy L."/>
            <person name="Du H."/>
            <person name="Sun H."/>
            <person name="Bradshaw-Cordum H."/>
            <person name="Ali J."/>
            <person name="Carter J."/>
            <person name="Cordes M."/>
            <person name="Harris A."/>
            <person name="Isak A."/>
            <person name="van Brunt A."/>
            <person name="Nguyen C."/>
            <person name="Du F."/>
            <person name="Courtney L."/>
            <person name="Kalicki J."/>
            <person name="Ozersky P."/>
            <person name="Abbott S."/>
            <person name="Armstrong J."/>
            <person name="Belter E.A."/>
            <person name="Caruso L."/>
            <person name="Cedroni M."/>
            <person name="Cotton M."/>
            <person name="Davidson T."/>
            <person name="Desai A."/>
            <person name="Elliott G."/>
            <person name="Erb T."/>
            <person name="Fronick C."/>
            <person name="Gaige T."/>
            <person name="Haakenson W."/>
            <person name="Haglund K."/>
            <person name="Holmes A."/>
            <person name="Harkins R."/>
            <person name="Kim K."/>
            <person name="Kruchowski S.S."/>
            <person name="Strong C.M."/>
            <person name="Grewal N."/>
            <person name="Goyea E."/>
            <person name="Hou S."/>
            <person name="Levy A."/>
            <person name="Martinka S."/>
            <person name="Mead K."/>
            <person name="McLellan M.D."/>
            <person name="Meyer R."/>
            <person name="Randall-Maher J."/>
            <person name="Tomlinson C."/>
            <person name="Dauphin-Kohlberg S."/>
            <person name="Kozlowicz-Reilly A."/>
            <person name="Shah N."/>
            <person name="Swearengen-Shahid S."/>
            <person name="Snider J."/>
            <person name="Strong J.T."/>
            <person name="Thompson J."/>
            <person name="Yoakum M."/>
            <person name="Leonard S."/>
            <person name="Pearman C."/>
            <person name="Trani L."/>
            <person name="Radionenko M."/>
            <person name="Waligorski J.E."/>
            <person name="Wang C."/>
            <person name="Rock S.M."/>
            <person name="Tin-Wollam A.-M."/>
            <person name="Maupin R."/>
            <person name="Latreille P."/>
            <person name="Wendl M.C."/>
            <person name="Yang S.-P."/>
            <person name="Pohl C."/>
            <person name="Wallis J.W."/>
            <person name="Spieth J."/>
            <person name="Bieri T.A."/>
            <person name="Berkowicz N."/>
            <person name="Nelson J.O."/>
            <person name="Osborne J."/>
            <person name="Ding L."/>
            <person name="Meyer R."/>
            <person name="Sabo A."/>
            <person name="Shotland Y."/>
            <person name="Sinha P."/>
            <person name="Wohldmann P.E."/>
            <person name="Cook L.L."/>
            <person name="Hickenbotham M.T."/>
            <person name="Eldred J."/>
            <person name="Williams D."/>
            <person name="Jones T.A."/>
            <person name="She X."/>
            <person name="Ciccarelli F.D."/>
            <person name="Izaurralde E."/>
            <person name="Taylor J."/>
            <person name="Schmutz J."/>
            <person name="Myers R.M."/>
            <person name="Cox D.R."/>
            <person name="Huang X."/>
            <person name="McPherson J.D."/>
            <person name="Mardis E.R."/>
            <person name="Clifton S.W."/>
            <person name="Warren W.C."/>
            <person name="Chinwalla A.T."/>
            <person name="Eddy S.R."/>
            <person name="Marra M.A."/>
            <person name="Ovcharenko I."/>
            <person name="Furey T.S."/>
            <person name="Miller W."/>
            <person name="Eichler E.E."/>
            <person name="Bork P."/>
            <person name="Suyama M."/>
            <person name="Torrents D."/>
            <person name="Waterston R.H."/>
            <person name="Wilson R.K."/>
        </authorList>
    </citation>
    <scope>NUCLEOTIDE SEQUENCE [LARGE SCALE GENOMIC DNA]</scope>
</reference>
<reference key="3">
    <citation type="journal article" date="2014" name="PLoS Genet.">
        <title>NCYM, a Cis-antisense gene of MYCN, encodes a de novo evolved protein that inhibits GSK3beta resulting in the stabilization of MYCN in human neuroblastomas.</title>
        <authorList>
            <person name="Suenaga Y."/>
            <person name="Islam S.M."/>
            <person name="Alagu J."/>
            <person name="Kaneko Y."/>
            <person name="Kato M."/>
            <person name="Tanaka Y."/>
            <person name="Kawana H."/>
            <person name="Hossain S."/>
            <person name="Matsumoto D."/>
            <person name="Yamamoto M."/>
            <person name="Shoji W."/>
            <person name="Itami M."/>
            <person name="Shibata T."/>
            <person name="Nakamura Y."/>
            <person name="Ohira M."/>
            <person name="Haraguchi S."/>
            <person name="Takatori A."/>
            <person name="Nakagawara A."/>
        </authorList>
    </citation>
    <scope>FUNCTION</scope>
    <scope>SUBCELLULAR LOCATION</scope>
    <scope>TISSUE SPECIFICITY</scope>
    <scope>INTERACTION WITH MYCN AND GSK3B</scope>
</reference>
<organism>
    <name type="scientific">Homo sapiens</name>
    <name type="common">Human</name>
    <dbReference type="NCBI Taxonomy" id="9606"/>
    <lineage>
        <taxon>Eukaryota</taxon>
        <taxon>Metazoa</taxon>
        <taxon>Chordata</taxon>
        <taxon>Craniata</taxon>
        <taxon>Vertebrata</taxon>
        <taxon>Euteleostomi</taxon>
        <taxon>Mammalia</taxon>
        <taxon>Eutheria</taxon>
        <taxon>Euarchontoglires</taxon>
        <taxon>Primates</taxon>
        <taxon>Haplorrhini</taxon>
        <taxon>Catarrhini</taxon>
        <taxon>Hominidae</taxon>
        <taxon>Homo</taxon>
    </lineage>
</organism>
<accession>P40205</accession>
<accession>Q53TD4</accession>
<comment type="function">
    <text evidence="2">Regulates stability of MYCN in neuroblastoma cells by inhibiting GSK3B-mediated MYCN phosphorylation. Inhibits GSK3B activity by promoting its phosphorylation at 'Ser-9' (PubMed:24391509).</text>
</comment>
<comment type="subunit">
    <text evidence="2">Interacts with MYCN and GSK3B.</text>
</comment>
<comment type="subcellular location">
    <subcellularLocation>
        <location evidence="2">Cytoplasm</location>
    </subcellularLocation>
    <subcellularLocation>
        <location evidence="2">Nucleus</location>
    </subcellularLocation>
</comment>
<comment type="tissue specificity">
    <text evidence="1 2">Expressed in the neuronal cells of the cerebrum and cerebellum, spermatocytes of the testis, pancreatic cells and also the heart. Expressed in both primary and metastatic neuroblastomas and in thyroid tumors (at protein level). Expression is associated with poor prognosis in neuroblastoma. Expressed in the fetal brain, lung, liver and kidney at varying low levels.</text>
</comment>
<comment type="developmental stage">
    <text>Expressed during fetal development, as well as in tumor cell lines containing amplified MYCN loci, where it is expressed at very high levels.</text>
</comment>
<keyword id="KW-0963">Cytoplasm</keyword>
<keyword id="KW-0539">Nucleus</keyword>
<keyword id="KW-1185">Reference proteome</keyword>